<feature type="chain" id="PRO_1000129804" description="Deoxyribose-phosphate aldolase">
    <location>
        <begin position="1"/>
        <end position="259"/>
    </location>
</feature>
<feature type="active site" description="Proton donor/acceptor" evidence="1">
    <location>
        <position position="102"/>
    </location>
</feature>
<feature type="active site" description="Schiff-base intermediate with acetaldehyde" evidence="1">
    <location>
        <position position="167"/>
    </location>
</feature>
<feature type="active site" description="Proton donor/acceptor" evidence="1">
    <location>
        <position position="201"/>
    </location>
</feature>
<proteinExistence type="inferred from homology"/>
<name>DEOC_ECOLU</name>
<organism>
    <name type="scientific">Escherichia coli O17:K52:H18 (strain UMN026 / ExPEC)</name>
    <dbReference type="NCBI Taxonomy" id="585056"/>
    <lineage>
        <taxon>Bacteria</taxon>
        <taxon>Pseudomonadati</taxon>
        <taxon>Pseudomonadota</taxon>
        <taxon>Gammaproteobacteria</taxon>
        <taxon>Enterobacterales</taxon>
        <taxon>Enterobacteriaceae</taxon>
        <taxon>Escherichia</taxon>
    </lineage>
</organism>
<evidence type="ECO:0000255" key="1">
    <source>
        <dbReference type="HAMAP-Rule" id="MF_00592"/>
    </source>
</evidence>
<keyword id="KW-0963">Cytoplasm</keyword>
<keyword id="KW-0456">Lyase</keyword>
<keyword id="KW-0704">Schiff base</keyword>
<protein>
    <recommendedName>
        <fullName evidence="1">Deoxyribose-phosphate aldolase</fullName>
        <shortName evidence="1">DERA</shortName>
        <ecNumber evidence="1">4.1.2.4</ecNumber>
    </recommendedName>
    <alternativeName>
        <fullName evidence="1">2-deoxy-D-ribose 5-phosphate aldolase</fullName>
    </alternativeName>
    <alternativeName>
        <fullName evidence="1">Phosphodeoxyriboaldolase</fullName>
        <shortName evidence="1">Deoxyriboaldolase</shortName>
    </alternativeName>
</protein>
<dbReference type="EC" id="4.1.2.4" evidence="1"/>
<dbReference type="EMBL" id="CU928163">
    <property type="protein sequence ID" value="CAR16114.1"/>
    <property type="molecule type" value="Genomic_DNA"/>
</dbReference>
<dbReference type="RefSeq" id="WP_001298497.1">
    <property type="nucleotide sequence ID" value="NC_011751.1"/>
</dbReference>
<dbReference type="RefSeq" id="YP_002415578.1">
    <property type="nucleotide sequence ID" value="NC_011751.1"/>
</dbReference>
<dbReference type="SMR" id="B7NH49"/>
<dbReference type="STRING" id="585056.ECUMN_5005"/>
<dbReference type="GeneID" id="86862495"/>
<dbReference type="KEGG" id="eum:ECUMN_5005"/>
<dbReference type="PATRIC" id="fig|585056.7.peg.5169"/>
<dbReference type="HOGENOM" id="CLU_053595_3_1_6"/>
<dbReference type="UniPathway" id="UPA00002">
    <property type="reaction ID" value="UER00468"/>
</dbReference>
<dbReference type="Proteomes" id="UP000007097">
    <property type="component" value="Chromosome"/>
</dbReference>
<dbReference type="GO" id="GO:0005737">
    <property type="term" value="C:cytoplasm"/>
    <property type="evidence" value="ECO:0007669"/>
    <property type="project" value="UniProtKB-SubCell"/>
</dbReference>
<dbReference type="GO" id="GO:0004139">
    <property type="term" value="F:deoxyribose-phosphate aldolase activity"/>
    <property type="evidence" value="ECO:0007669"/>
    <property type="project" value="UniProtKB-UniRule"/>
</dbReference>
<dbReference type="GO" id="GO:0006018">
    <property type="term" value="P:2-deoxyribose 1-phosphate catabolic process"/>
    <property type="evidence" value="ECO:0007669"/>
    <property type="project" value="UniProtKB-UniRule"/>
</dbReference>
<dbReference type="GO" id="GO:0016052">
    <property type="term" value="P:carbohydrate catabolic process"/>
    <property type="evidence" value="ECO:0007669"/>
    <property type="project" value="TreeGrafter"/>
</dbReference>
<dbReference type="GO" id="GO:0009264">
    <property type="term" value="P:deoxyribonucleotide catabolic process"/>
    <property type="evidence" value="ECO:0007669"/>
    <property type="project" value="InterPro"/>
</dbReference>
<dbReference type="CDD" id="cd00959">
    <property type="entry name" value="DeoC"/>
    <property type="match status" value="1"/>
</dbReference>
<dbReference type="FunFam" id="3.20.20.70:FF:000034">
    <property type="entry name" value="Deoxyribose-phosphate aldolase"/>
    <property type="match status" value="1"/>
</dbReference>
<dbReference type="Gene3D" id="3.20.20.70">
    <property type="entry name" value="Aldolase class I"/>
    <property type="match status" value="1"/>
</dbReference>
<dbReference type="HAMAP" id="MF_00592">
    <property type="entry name" value="DeoC_type2"/>
    <property type="match status" value="1"/>
</dbReference>
<dbReference type="InterPro" id="IPR013785">
    <property type="entry name" value="Aldolase_TIM"/>
</dbReference>
<dbReference type="InterPro" id="IPR011343">
    <property type="entry name" value="DeoC"/>
</dbReference>
<dbReference type="InterPro" id="IPR002915">
    <property type="entry name" value="DeoC/FbaB/LacD_aldolase"/>
</dbReference>
<dbReference type="InterPro" id="IPR023649">
    <property type="entry name" value="DeoC_typeII"/>
</dbReference>
<dbReference type="NCBIfam" id="TIGR00126">
    <property type="entry name" value="deoC"/>
    <property type="match status" value="1"/>
</dbReference>
<dbReference type="PANTHER" id="PTHR10889">
    <property type="entry name" value="DEOXYRIBOSE-PHOSPHATE ALDOLASE"/>
    <property type="match status" value="1"/>
</dbReference>
<dbReference type="PANTHER" id="PTHR10889:SF3">
    <property type="entry name" value="DEOXYRIBOSE-PHOSPHATE ALDOLASE"/>
    <property type="match status" value="1"/>
</dbReference>
<dbReference type="Pfam" id="PF01791">
    <property type="entry name" value="DeoC"/>
    <property type="match status" value="1"/>
</dbReference>
<dbReference type="PIRSF" id="PIRSF001357">
    <property type="entry name" value="DeoC"/>
    <property type="match status" value="1"/>
</dbReference>
<dbReference type="SMART" id="SM01133">
    <property type="entry name" value="DeoC"/>
    <property type="match status" value="1"/>
</dbReference>
<dbReference type="SUPFAM" id="SSF51569">
    <property type="entry name" value="Aldolase"/>
    <property type="match status" value="1"/>
</dbReference>
<accession>B7NH49</accession>
<gene>
    <name evidence="1" type="primary">deoC</name>
    <name type="ordered locus">ECUMN_5005</name>
</gene>
<reference key="1">
    <citation type="journal article" date="2009" name="PLoS Genet.">
        <title>Organised genome dynamics in the Escherichia coli species results in highly diverse adaptive paths.</title>
        <authorList>
            <person name="Touchon M."/>
            <person name="Hoede C."/>
            <person name="Tenaillon O."/>
            <person name="Barbe V."/>
            <person name="Baeriswyl S."/>
            <person name="Bidet P."/>
            <person name="Bingen E."/>
            <person name="Bonacorsi S."/>
            <person name="Bouchier C."/>
            <person name="Bouvet O."/>
            <person name="Calteau A."/>
            <person name="Chiapello H."/>
            <person name="Clermont O."/>
            <person name="Cruveiller S."/>
            <person name="Danchin A."/>
            <person name="Diard M."/>
            <person name="Dossat C."/>
            <person name="Karoui M.E."/>
            <person name="Frapy E."/>
            <person name="Garry L."/>
            <person name="Ghigo J.M."/>
            <person name="Gilles A.M."/>
            <person name="Johnson J."/>
            <person name="Le Bouguenec C."/>
            <person name="Lescat M."/>
            <person name="Mangenot S."/>
            <person name="Martinez-Jehanne V."/>
            <person name="Matic I."/>
            <person name="Nassif X."/>
            <person name="Oztas S."/>
            <person name="Petit M.A."/>
            <person name="Pichon C."/>
            <person name="Rouy Z."/>
            <person name="Ruf C.S."/>
            <person name="Schneider D."/>
            <person name="Tourret J."/>
            <person name="Vacherie B."/>
            <person name="Vallenet D."/>
            <person name="Medigue C."/>
            <person name="Rocha E.P.C."/>
            <person name="Denamur E."/>
        </authorList>
    </citation>
    <scope>NUCLEOTIDE SEQUENCE [LARGE SCALE GENOMIC DNA]</scope>
    <source>
        <strain>UMN026 / ExPEC</strain>
    </source>
</reference>
<comment type="function">
    <text evidence="1">Catalyzes a reversible aldol reaction between acetaldehyde and D-glyceraldehyde 3-phosphate to generate 2-deoxy-D-ribose 5-phosphate.</text>
</comment>
<comment type="catalytic activity">
    <reaction evidence="1">
        <text>2-deoxy-D-ribose 5-phosphate = D-glyceraldehyde 3-phosphate + acetaldehyde</text>
        <dbReference type="Rhea" id="RHEA:12821"/>
        <dbReference type="ChEBI" id="CHEBI:15343"/>
        <dbReference type="ChEBI" id="CHEBI:59776"/>
        <dbReference type="ChEBI" id="CHEBI:62877"/>
        <dbReference type="EC" id="4.1.2.4"/>
    </reaction>
</comment>
<comment type="pathway">
    <text evidence="1">Carbohydrate degradation; 2-deoxy-D-ribose 1-phosphate degradation; D-glyceraldehyde 3-phosphate and acetaldehyde from 2-deoxy-alpha-D-ribose 1-phosphate: step 2/2.</text>
</comment>
<comment type="subcellular location">
    <subcellularLocation>
        <location evidence="1">Cytoplasm</location>
    </subcellularLocation>
</comment>
<comment type="similarity">
    <text evidence="1">Belongs to the DeoC/FbaB aldolase family. DeoC type 2 subfamily.</text>
</comment>
<sequence>MTDLKASSLRALKLMDLTTLNDDDTDEKVIALCHQAKTPVGNTAAICIYPRFIPIARKTLKEQGTPEIRIATVTNFPHGNDDIDIALAETRAAIAYGADEVDVVFPYRALMAGNEQVGFDLVKACKEACAAANVLLKVIIETGELKDEALIRKASEISIKAGADFIKTSTGKVAVNATPESARIMMEVIRDMGVEKTVGFKPAGGVRTAEDAQKYLAIADELFGADWADARHYRFGASSLLASLLKALGHGDGKSASSY</sequence>